<comment type="cofactor">
    <cofactor evidence="3">
        <name>Zn(2+)</name>
        <dbReference type="ChEBI" id="CHEBI:29105"/>
    </cofactor>
    <text evidence="3">Binds 1 zinc ion per subunit.</text>
</comment>
<comment type="subcellular location">
    <subcellularLocation>
        <location evidence="3">Secreted</location>
    </subcellularLocation>
</comment>
<comment type="similarity">
    <text evidence="3">Belongs to the dictomallein family.</text>
</comment>
<gene>
    <name type="primary">dtmlD</name>
    <name type="ORF">DDB_G0292826</name>
</gene>
<keyword id="KW-0378">Hydrolase</keyword>
<keyword id="KW-0479">Metal-binding</keyword>
<keyword id="KW-0482">Metalloprotease</keyword>
<keyword id="KW-0645">Protease</keyword>
<keyword id="KW-1185">Reference proteome</keyword>
<keyword id="KW-0964">Secreted</keyword>
<keyword id="KW-0732">Signal</keyword>
<keyword id="KW-0862">Zinc</keyword>
<proteinExistence type="inferred from homology"/>
<sequence>MKLVLIFLIINFLLIINCENLIKVLDVRLAQTHIIPIEGKTWNLKNKTQHMSIIGNRRALLLASFEDLNKSYYVSIWLDNKIIGSLELKDPSQLPQTEDNGERYSTKHHSVLLPKEWIRPNMKIKFTLTESKDNSSLNIDSSNFFYPDVSQDYTLKMWTLPFYLFGANDTNTQPFSVTNGIGSEITKELMERWSCSDIIAVNHPIQRIDWPYLVMEPRNGNPAMLITNSDQKKDGYAIMNGVLNILTEIREAFGESTSSIQIYSPLLHLGANGKYTNPGGGLGGGSRGTGDHKYTFTFFHEQGHAMGLPHAGEAFAAGSYPYVNGSLLGSEWGYDANHNELLGTFIPPTSDQFKNCRRNSVFDSKGRCVKQSVMQGGAGDYSSKYRYSMFADFEMTTIQNYFKNSIYYDQTKGTYKKWNDTSKSYFEYIPSTKNNGLWGLDDGTPIERDIEVYTILFTYSTVGPKELSQIYPILKSSKGNLMKRYDPTNKNDMKLITPGSGSWYCFASGCDYTVRVTFDDDSLEHILLRQGKRKYWNPMGDFKENLYNATSSNSFILRGINVKATKSIKKVELLETLMAWKGISNATVLVSKDF</sequence>
<organism>
    <name type="scientific">Dictyostelium discoideum</name>
    <name type="common">Social amoeba</name>
    <dbReference type="NCBI Taxonomy" id="44689"/>
    <lineage>
        <taxon>Eukaryota</taxon>
        <taxon>Amoebozoa</taxon>
        <taxon>Evosea</taxon>
        <taxon>Eumycetozoa</taxon>
        <taxon>Dictyostelia</taxon>
        <taxon>Dictyosteliales</taxon>
        <taxon>Dictyosteliaceae</taxon>
        <taxon>Dictyostelium</taxon>
    </lineage>
</organism>
<reference key="1">
    <citation type="journal article" date="2005" name="Nature">
        <title>The genome of the social amoeba Dictyostelium discoideum.</title>
        <authorList>
            <person name="Eichinger L."/>
            <person name="Pachebat J.A."/>
            <person name="Gloeckner G."/>
            <person name="Rajandream M.A."/>
            <person name="Sucgang R."/>
            <person name="Berriman M."/>
            <person name="Song J."/>
            <person name="Olsen R."/>
            <person name="Szafranski K."/>
            <person name="Xu Q."/>
            <person name="Tunggal B."/>
            <person name="Kummerfeld S."/>
            <person name="Madera M."/>
            <person name="Konfortov B.A."/>
            <person name="Rivero F."/>
            <person name="Bankier A.T."/>
            <person name="Lehmann R."/>
            <person name="Hamlin N."/>
            <person name="Davies R."/>
            <person name="Gaudet P."/>
            <person name="Fey P."/>
            <person name="Pilcher K."/>
            <person name="Chen G."/>
            <person name="Saunders D."/>
            <person name="Sodergren E.J."/>
            <person name="Davis P."/>
            <person name="Kerhornou A."/>
            <person name="Nie X."/>
            <person name="Hall N."/>
            <person name="Anjard C."/>
            <person name="Hemphill L."/>
            <person name="Bason N."/>
            <person name="Farbrother P."/>
            <person name="Desany B."/>
            <person name="Just E."/>
            <person name="Morio T."/>
            <person name="Rost R."/>
            <person name="Churcher C.M."/>
            <person name="Cooper J."/>
            <person name="Haydock S."/>
            <person name="van Driessche N."/>
            <person name="Cronin A."/>
            <person name="Goodhead I."/>
            <person name="Muzny D.M."/>
            <person name="Mourier T."/>
            <person name="Pain A."/>
            <person name="Lu M."/>
            <person name="Harper D."/>
            <person name="Lindsay R."/>
            <person name="Hauser H."/>
            <person name="James K.D."/>
            <person name="Quiles M."/>
            <person name="Madan Babu M."/>
            <person name="Saito T."/>
            <person name="Buchrieser C."/>
            <person name="Wardroper A."/>
            <person name="Felder M."/>
            <person name="Thangavelu M."/>
            <person name="Johnson D."/>
            <person name="Knights A."/>
            <person name="Loulseged H."/>
            <person name="Mungall K.L."/>
            <person name="Oliver K."/>
            <person name="Price C."/>
            <person name="Quail M.A."/>
            <person name="Urushihara H."/>
            <person name="Hernandez J."/>
            <person name="Rabbinowitsch E."/>
            <person name="Steffen D."/>
            <person name="Sanders M."/>
            <person name="Ma J."/>
            <person name="Kohara Y."/>
            <person name="Sharp S."/>
            <person name="Simmonds M.N."/>
            <person name="Spiegler S."/>
            <person name="Tivey A."/>
            <person name="Sugano S."/>
            <person name="White B."/>
            <person name="Walker D."/>
            <person name="Woodward J.R."/>
            <person name="Winckler T."/>
            <person name="Tanaka Y."/>
            <person name="Shaulsky G."/>
            <person name="Schleicher M."/>
            <person name="Weinstock G.M."/>
            <person name="Rosenthal A."/>
            <person name="Cox E.C."/>
            <person name="Chisholm R.L."/>
            <person name="Gibbs R.A."/>
            <person name="Loomis W.F."/>
            <person name="Platzer M."/>
            <person name="Kay R.R."/>
            <person name="Williams J.G."/>
            <person name="Dear P.H."/>
            <person name="Noegel A.A."/>
            <person name="Barrell B.G."/>
            <person name="Kuspa A."/>
        </authorList>
    </citation>
    <scope>NUCLEOTIDE SEQUENCE [LARGE SCALE GENOMIC DNA]</scope>
    <source>
        <strain>AX4</strain>
    </source>
</reference>
<protein>
    <recommendedName>
        <fullName>Dictomallein-4</fullName>
        <ecNumber>3.4.24.-</ecNumber>
    </recommendedName>
</protein>
<accession>Q54CP8</accession>
<evidence type="ECO:0000250" key="1"/>
<evidence type="ECO:0000255" key="2"/>
<evidence type="ECO:0000305" key="3"/>
<name>DTML4_DICDI</name>
<dbReference type="EC" id="3.4.24.-"/>
<dbReference type="EMBL" id="AAFI02000197">
    <property type="protein sequence ID" value="EAL60962.1"/>
    <property type="molecule type" value="Genomic_DNA"/>
</dbReference>
<dbReference type="RefSeq" id="XP_629368.1">
    <property type="nucleotide sequence ID" value="XM_629366.1"/>
</dbReference>
<dbReference type="FunCoup" id="Q54CP8">
    <property type="interactions" value="4"/>
</dbReference>
<dbReference type="PaxDb" id="44689-DDB0252870"/>
<dbReference type="EnsemblProtists" id="EAL60962">
    <property type="protein sequence ID" value="EAL60962"/>
    <property type="gene ID" value="DDB_G0292826"/>
</dbReference>
<dbReference type="GeneID" id="8628885"/>
<dbReference type="KEGG" id="ddi:DDB_G0292826"/>
<dbReference type="dictyBase" id="DDB_G0292826"/>
<dbReference type="VEuPathDB" id="AmoebaDB:DDB_G0292826"/>
<dbReference type="eggNOG" id="ENOG502SN3T">
    <property type="taxonomic scope" value="Eukaryota"/>
</dbReference>
<dbReference type="HOGENOM" id="CLU_451780_0_0_1"/>
<dbReference type="InParanoid" id="Q54CP8"/>
<dbReference type="PhylomeDB" id="Q54CP8"/>
<dbReference type="PRO" id="PR:Q54CP8"/>
<dbReference type="Proteomes" id="UP000002195">
    <property type="component" value="Chromosome 6"/>
</dbReference>
<dbReference type="GO" id="GO:0005576">
    <property type="term" value="C:extracellular region"/>
    <property type="evidence" value="ECO:0007669"/>
    <property type="project" value="UniProtKB-SubCell"/>
</dbReference>
<dbReference type="GO" id="GO:0046872">
    <property type="term" value="F:metal ion binding"/>
    <property type="evidence" value="ECO:0007669"/>
    <property type="project" value="UniProtKB-KW"/>
</dbReference>
<dbReference type="GO" id="GO:0004222">
    <property type="term" value="F:metalloendopeptidase activity"/>
    <property type="evidence" value="ECO:0007669"/>
    <property type="project" value="InterPro"/>
</dbReference>
<dbReference type="GO" id="GO:0006508">
    <property type="term" value="P:proteolysis"/>
    <property type="evidence" value="ECO:0007669"/>
    <property type="project" value="UniProtKB-KW"/>
</dbReference>
<dbReference type="InterPro" id="IPR051256">
    <property type="entry name" value="Dictomallein"/>
</dbReference>
<dbReference type="InterPro" id="IPR019503">
    <property type="entry name" value="Peptidase_M66_dom"/>
</dbReference>
<dbReference type="PANTHER" id="PTHR39540">
    <property type="match status" value="1"/>
</dbReference>
<dbReference type="PANTHER" id="PTHR39540:SF1">
    <property type="entry name" value="DICTOMALLEIN-1-RELATED"/>
    <property type="match status" value="1"/>
</dbReference>
<dbReference type="Pfam" id="PF10462">
    <property type="entry name" value="Peptidase_M66"/>
    <property type="match status" value="1"/>
</dbReference>
<dbReference type="SUPFAM" id="SSF55486">
    <property type="entry name" value="Metalloproteases ('zincins'), catalytic domain"/>
    <property type="match status" value="1"/>
</dbReference>
<dbReference type="PROSITE" id="PS51694">
    <property type="entry name" value="PEPTIDASE_M66"/>
    <property type="match status" value="1"/>
</dbReference>
<feature type="signal peptide" evidence="2">
    <location>
        <begin position="1"/>
        <end position="18"/>
    </location>
</feature>
<feature type="chain" id="PRO_0000322649" description="Dictomallein-4">
    <location>
        <begin position="19"/>
        <end position="594"/>
    </location>
</feature>
<feature type="domain" description="Peptidase M66">
    <location>
        <begin position="147"/>
        <end position="408"/>
    </location>
</feature>
<feature type="active site" evidence="1">
    <location>
        <position position="301"/>
    </location>
</feature>
<feature type="binding site" evidence="1">
    <location>
        <position position="300"/>
    </location>
    <ligand>
        <name>Zn(2+)</name>
        <dbReference type="ChEBI" id="CHEBI:29105"/>
        <note>catalytic</note>
    </ligand>
</feature>
<feature type="binding site" evidence="1">
    <location>
        <position position="304"/>
    </location>
    <ligand>
        <name>Zn(2+)</name>
        <dbReference type="ChEBI" id="CHEBI:29105"/>
        <note>catalytic</note>
    </ligand>
</feature>
<feature type="binding site" evidence="1">
    <location>
        <position position="310"/>
    </location>
    <ligand>
        <name>Zn(2+)</name>
        <dbReference type="ChEBI" id="CHEBI:29105"/>
        <note>catalytic</note>
    </ligand>
</feature>